<gene>
    <name evidence="10" type="ORF">CG9338</name>
</gene>
<feature type="signal peptide" evidence="2">
    <location>
        <begin position="1"/>
        <end position="23"/>
    </location>
</feature>
<feature type="chain" id="PRO_5015100244" description="UPAR/Ly6 domain-containing protein CG9338" evidence="2">
    <location>
        <begin position="24"/>
        <end position="124"/>
    </location>
</feature>
<feature type="propeptide" id="PRO_0000459696" description="Removed in mature form" evidence="2">
    <location>
        <begin position="125"/>
        <end position="147"/>
    </location>
</feature>
<feature type="topological domain" description="Extracellular" evidence="6">
    <location>
        <begin position="24"/>
        <end position="126"/>
    </location>
</feature>
<feature type="transmembrane region" description="Helical" evidence="2">
    <location>
        <begin position="127"/>
        <end position="147"/>
    </location>
</feature>
<feature type="lipid moiety-binding region" description="GPI-anchor amidated asparagine" evidence="2">
    <location>
        <position position="124"/>
    </location>
</feature>
<feature type="glycosylation site" description="N-linked (GlcNAc...) asparagine" evidence="3">
    <location>
        <position position="68"/>
    </location>
</feature>
<feature type="disulfide bond" evidence="7">
    <location>
        <begin position="26"/>
        <end position="72"/>
    </location>
</feature>
<feature type="disulfide bond" evidence="7">
    <location>
        <begin position="29"/>
        <end position="37"/>
    </location>
</feature>
<feature type="disulfide bond" evidence="7">
    <location>
        <begin position="51"/>
        <end position="89"/>
    </location>
</feature>
<feature type="disulfide bond" evidence="7">
    <location>
        <begin position="101"/>
        <end position="115"/>
    </location>
</feature>
<feature type="disulfide bond" evidence="7">
    <location>
        <begin position="118"/>
        <end position="123"/>
    </location>
</feature>
<sequence length="147" mass="15743">MVSSVKMILALTVLATVACTGYAIKCYQCDSLTNSECGKDIKSDSSLVLDCTKMAPPRFLQNFFPVRNATGCMKQTIDIPGNPQIVRSCYFGNIADTKVGCQTDPSLTINKLLSCEVCTEDECNGTSSLAPIAGVILLFFGLARLLA</sequence>
<proteinExistence type="evidence at protein level"/>
<dbReference type="EMBL" id="AE014134">
    <property type="protein sequence ID" value="AAF53940.1"/>
    <property type="molecule type" value="Genomic_DNA"/>
</dbReference>
<dbReference type="EMBL" id="AE014134">
    <property type="protein sequence ID" value="AGB93181.1"/>
    <property type="molecule type" value="Genomic_DNA"/>
</dbReference>
<dbReference type="EMBL" id="AY119487">
    <property type="protein sequence ID" value="AAM50141.1"/>
    <property type="molecule type" value="mRNA"/>
</dbReference>
<dbReference type="EMBL" id="KX531372">
    <property type="protein sequence ID" value="ANY27182.1"/>
    <property type="molecule type" value="mRNA"/>
</dbReference>
<dbReference type="RefSeq" id="NP_001260646.1">
    <property type="nucleotide sequence ID" value="NM_001273717.1"/>
</dbReference>
<dbReference type="RefSeq" id="NP_610071.1">
    <property type="nucleotide sequence ID" value="NM_136227.2"/>
</dbReference>
<dbReference type="STRING" id="7227.FBpp0305224"/>
<dbReference type="GlyGen" id="Q9VIH9">
    <property type="glycosylation" value="1 site"/>
</dbReference>
<dbReference type="PaxDb" id="7227-FBpp0305224"/>
<dbReference type="DNASU" id="35357"/>
<dbReference type="EnsemblMetazoa" id="FBtr0081428">
    <property type="protein sequence ID" value="FBpp0080957"/>
    <property type="gene ID" value="FBgn0032899"/>
</dbReference>
<dbReference type="EnsemblMetazoa" id="FBtr0333009">
    <property type="protein sequence ID" value="FBpp0305224"/>
    <property type="gene ID" value="FBgn0032899"/>
</dbReference>
<dbReference type="GeneID" id="35357"/>
<dbReference type="KEGG" id="dme:Dmel_CG9338"/>
<dbReference type="UCSC" id="CG9338-RA">
    <property type="organism name" value="d. melanogaster"/>
</dbReference>
<dbReference type="AGR" id="FB:FBgn0032899"/>
<dbReference type="FlyBase" id="FBgn0032899">
    <property type="gene designation" value="CG9338"/>
</dbReference>
<dbReference type="VEuPathDB" id="VectorBase:FBgn0032899"/>
<dbReference type="eggNOG" id="ENOG502T7Z1">
    <property type="taxonomic scope" value="Eukaryota"/>
</dbReference>
<dbReference type="GeneTree" id="ENSGT00540000073450"/>
<dbReference type="HOGENOM" id="CLU_119218_0_0_1"/>
<dbReference type="InParanoid" id="Q9VIH9"/>
<dbReference type="OMA" id="IEGVPGH"/>
<dbReference type="OrthoDB" id="6083863at2759"/>
<dbReference type="BioGRID-ORCS" id="35357">
    <property type="hits" value="0 hits in 1 CRISPR screen"/>
</dbReference>
<dbReference type="GenomeRNAi" id="35357"/>
<dbReference type="Proteomes" id="UP000000803">
    <property type="component" value="Chromosome 2L"/>
</dbReference>
<dbReference type="Bgee" id="FBgn0032899">
    <property type="expression patterns" value="Expressed in oviduct (Drosophila) and 118 other cell types or tissues"/>
</dbReference>
<dbReference type="GO" id="GO:0005886">
    <property type="term" value="C:plasma membrane"/>
    <property type="evidence" value="ECO:0000318"/>
    <property type="project" value="GO_Central"/>
</dbReference>
<dbReference type="GO" id="GO:0098552">
    <property type="term" value="C:side of membrane"/>
    <property type="evidence" value="ECO:0007669"/>
    <property type="project" value="UniProtKB-KW"/>
</dbReference>
<dbReference type="GO" id="GO:0032222">
    <property type="term" value="P:regulation of synaptic transmission, cholinergic"/>
    <property type="evidence" value="ECO:0007669"/>
    <property type="project" value="InterPro"/>
</dbReference>
<dbReference type="GO" id="GO:0030431">
    <property type="term" value="P:sleep"/>
    <property type="evidence" value="ECO:0007669"/>
    <property type="project" value="InterPro"/>
</dbReference>
<dbReference type="InterPro" id="IPR031424">
    <property type="entry name" value="QVR-like"/>
</dbReference>
<dbReference type="InterPro" id="IPR050975">
    <property type="entry name" value="Sleep_regulator"/>
</dbReference>
<dbReference type="PANTHER" id="PTHR33562">
    <property type="entry name" value="ATILLA, ISOFORM B-RELATED-RELATED"/>
    <property type="match status" value="1"/>
</dbReference>
<dbReference type="PANTHER" id="PTHR33562:SF18">
    <property type="entry name" value="BOUDIN-RELATED"/>
    <property type="match status" value="1"/>
</dbReference>
<dbReference type="Pfam" id="PF17064">
    <property type="entry name" value="QVR"/>
    <property type="match status" value="1"/>
</dbReference>
<dbReference type="PROSITE" id="PS51257">
    <property type="entry name" value="PROKAR_LIPOPROTEIN"/>
    <property type="match status" value="1"/>
</dbReference>
<comment type="function">
    <text evidence="1">May be involved in regulating neuron excitability.</text>
</comment>
<comment type="subcellular location">
    <subcellularLocation>
        <location evidence="5">Cell membrane</location>
        <topology evidence="4">Lipid-anchor</topology>
        <topology evidence="4">GPI-anchor</topology>
    </subcellularLocation>
</comment>
<comment type="developmental stage">
    <text evidence="5">Expressed in the embryonic and larval glia of the peripheral nervous system, the wrapping glia of the larval eye disk and the midline glia throughout development (at protein level) (PubMed:28961967). Expressed in the surface glia of the larval central nervous system (at protein level) (PubMed:28961967). Expressed in the eye carpet glia (at protein level) (PubMed:28961967). In the embryo, expressed in Bolwig's organ and at lower levels in the heart and anal plate (at protein level) (PubMed:28961967). Expressed in embryonic hemocytes (PubMed:28961967).</text>
</comment>
<comment type="similarity">
    <text evidence="4">Belongs to the quiver family.</text>
</comment>
<protein>
    <recommendedName>
        <fullName evidence="6">UPAR/Ly6 domain-containing protein CG9338</fullName>
    </recommendedName>
</protein>
<name>BERO2_DROME</name>
<organism evidence="11">
    <name type="scientific">Drosophila melanogaster</name>
    <name type="common">Fruit fly</name>
    <dbReference type="NCBI Taxonomy" id="7227"/>
    <lineage>
        <taxon>Eukaryota</taxon>
        <taxon>Metazoa</taxon>
        <taxon>Ecdysozoa</taxon>
        <taxon>Arthropoda</taxon>
        <taxon>Hexapoda</taxon>
        <taxon>Insecta</taxon>
        <taxon>Pterygota</taxon>
        <taxon>Neoptera</taxon>
        <taxon>Endopterygota</taxon>
        <taxon>Diptera</taxon>
        <taxon>Brachycera</taxon>
        <taxon>Muscomorpha</taxon>
        <taxon>Ephydroidea</taxon>
        <taxon>Drosophilidae</taxon>
        <taxon>Drosophila</taxon>
        <taxon>Sophophora</taxon>
    </lineage>
</organism>
<keyword id="KW-1003">Cell membrane</keyword>
<keyword id="KW-1015">Disulfide bond</keyword>
<keyword id="KW-0325">Glycoprotein</keyword>
<keyword id="KW-0336">GPI-anchor</keyword>
<keyword id="KW-0449">Lipoprotein</keyword>
<keyword id="KW-0472">Membrane</keyword>
<keyword id="KW-1185">Reference proteome</keyword>
<keyword id="KW-0732">Signal</keyword>
<keyword id="KW-0812">Transmembrane</keyword>
<keyword id="KW-1133">Transmembrane helix</keyword>
<evidence type="ECO:0000250" key="1">
    <source>
        <dbReference type="UniProtKB" id="Q9VII1"/>
    </source>
</evidence>
<evidence type="ECO:0000255" key="2"/>
<evidence type="ECO:0000255" key="3">
    <source>
        <dbReference type="PROSITE-ProRule" id="PRU00498"/>
    </source>
</evidence>
<evidence type="ECO:0000255" key="4">
    <source>
        <dbReference type="RuleBase" id="RU369020"/>
    </source>
</evidence>
<evidence type="ECO:0000269" key="5">
    <source>
    </source>
</evidence>
<evidence type="ECO:0000305" key="6"/>
<evidence type="ECO:0000305" key="7">
    <source>
    </source>
</evidence>
<evidence type="ECO:0000312" key="8">
    <source>
        <dbReference type="EMBL" id="AAM50141.1"/>
    </source>
</evidence>
<evidence type="ECO:0000312" key="9">
    <source>
        <dbReference type="EMBL" id="ANY27182.1"/>
    </source>
</evidence>
<evidence type="ECO:0000312" key="10">
    <source>
        <dbReference type="FlyBase" id="FBgn0032899"/>
    </source>
</evidence>
<evidence type="ECO:0000312" key="11">
    <source>
        <dbReference type="Proteomes" id="UP000000803"/>
    </source>
</evidence>
<reference evidence="11" key="1">
    <citation type="journal article" date="2000" name="Science">
        <title>The genome sequence of Drosophila melanogaster.</title>
        <authorList>
            <person name="Adams M.D."/>
            <person name="Celniker S.E."/>
            <person name="Holt R.A."/>
            <person name="Evans C.A."/>
            <person name="Gocayne J.D."/>
            <person name="Amanatides P.G."/>
            <person name="Scherer S.E."/>
            <person name="Li P.W."/>
            <person name="Hoskins R.A."/>
            <person name="Galle R.F."/>
            <person name="George R.A."/>
            <person name="Lewis S.E."/>
            <person name="Richards S."/>
            <person name="Ashburner M."/>
            <person name="Henderson S.N."/>
            <person name="Sutton G.G."/>
            <person name="Wortman J.R."/>
            <person name="Yandell M.D."/>
            <person name="Zhang Q."/>
            <person name="Chen L.X."/>
            <person name="Brandon R.C."/>
            <person name="Rogers Y.-H.C."/>
            <person name="Blazej R.G."/>
            <person name="Champe M."/>
            <person name="Pfeiffer B.D."/>
            <person name="Wan K.H."/>
            <person name="Doyle C."/>
            <person name="Baxter E.G."/>
            <person name="Helt G."/>
            <person name="Nelson C.R."/>
            <person name="Miklos G.L.G."/>
            <person name="Abril J.F."/>
            <person name="Agbayani A."/>
            <person name="An H.-J."/>
            <person name="Andrews-Pfannkoch C."/>
            <person name="Baldwin D."/>
            <person name="Ballew R.M."/>
            <person name="Basu A."/>
            <person name="Baxendale J."/>
            <person name="Bayraktaroglu L."/>
            <person name="Beasley E.M."/>
            <person name="Beeson K.Y."/>
            <person name="Benos P.V."/>
            <person name="Berman B.P."/>
            <person name="Bhandari D."/>
            <person name="Bolshakov S."/>
            <person name="Borkova D."/>
            <person name="Botchan M.R."/>
            <person name="Bouck J."/>
            <person name="Brokstein P."/>
            <person name="Brottier P."/>
            <person name="Burtis K.C."/>
            <person name="Busam D.A."/>
            <person name="Butler H."/>
            <person name="Cadieu E."/>
            <person name="Center A."/>
            <person name="Chandra I."/>
            <person name="Cherry J.M."/>
            <person name="Cawley S."/>
            <person name="Dahlke C."/>
            <person name="Davenport L.B."/>
            <person name="Davies P."/>
            <person name="de Pablos B."/>
            <person name="Delcher A."/>
            <person name="Deng Z."/>
            <person name="Mays A.D."/>
            <person name="Dew I."/>
            <person name="Dietz S.M."/>
            <person name="Dodson K."/>
            <person name="Doup L.E."/>
            <person name="Downes M."/>
            <person name="Dugan-Rocha S."/>
            <person name="Dunkov B.C."/>
            <person name="Dunn P."/>
            <person name="Durbin K.J."/>
            <person name="Evangelista C.C."/>
            <person name="Ferraz C."/>
            <person name="Ferriera S."/>
            <person name="Fleischmann W."/>
            <person name="Fosler C."/>
            <person name="Gabrielian A.E."/>
            <person name="Garg N.S."/>
            <person name="Gelbart W.M."/>
            <person name="Glasser K."/>
            <person name="Glodek A."/>
            <person name="Gong F."/>
            <person name="Gorrell J.H."/>
            <person name="Gu Z."/>
            <person name="Guan P."/>
            <person name="Harris M."/>
            <person name="Harris N.L."/>
            <person name="Harvey D.A."/>
            <person name="Heiman T.J."/>
            <person name="Hernandez J.R."/>
            <person name="Houck J."/>
            <person name="Hostin D."/>
            <person name="Houston K.A."/>
            <person name="Howland T.J."/>
            <person name="Wei M.-H."/>
            <person name="Ibegwam C."/>
            <person name="Jalali M."/>
            <person name="Kalush F."/>
            <person name="Karpen G.H."/>
            <person name="Ke Z."/>
            <person name="Kennison J.A."/>
            <person name="Ketchum K.A."/>
            <person name="Kimmel B.E."/>
            <person name="Kodira C.D."/>
            <person name="Kraft C.L."/>
            <person name="Kravitz S."/>
            <person name="Kulp D."/>
            <person name="Lai Z."/>
            <person name="Lasko P."/>
            <person name="Lei Y."/>
            <person name="Levitsky A.A."/>
            <person name="Li J.H."/>
            <person name="Li Z."/>
            <person name="Liang Y."/>
            <person name="Lin X."/>
            <person name="Liu X."/>
            <person name="Mattei B."/>
            <person name="McIntosh T.C."/>
            <person name="McLeod M.P."/>
            <person name="McPherson D."/>
            <person name="Merkulov G."/>
            <person name="Milshina N.V."/>
            <person name="Mobarry C."/>
            <person name="Morris J."/>
            <person name="Moshrefi A."/>
            <person name="Mount S.M."/>
            <person name="Moy M."/>
            <person name="Murphy B."/>
            <person name="Murphy L."/>
            <person name="Muzny D.M."/>
            <person name="Nelson D.L."/>
            <person name="Nelson D.R."/>
            <person name="Nelson K.A."/>
            <person name="Nixon K."/>
            <person name="Nusskern D.R."/>
            <person name="Pacleb J.M."/>
            <person name="Palazzolo M."/>
            <person name="Pittman G.S."/>
            <person name="Pan S."/>
            <person name="Pollard J."/>
            <person name="Puri V."/>
            <person name="Reese M.G."/>
            <person name="Reinert K."/>
            <person name="Remington K."/>
            <person name="Saunders R.D.C."/>
            <person name="Scheeler F."/>
            <person name="Shen H."/>
            <person name="Shue B.C."/>
            <person name="Siden-Kiamos I."/>
            <person name="Simpson M."/>
            <person name="Skupski M.P."/>
            <person name="Smith T.J."/>
            <person name="Spier E."/>
            <person name="Spradling A.C."/>
            <person name="Stapleton M."/>
            <person name="Strong R."/>
            <person name="Sun E."/>
            <person name="Svirskas R."/>
            <person name="Tector C."/>
            <person name="Turner R."/>
            <person name="Venter E."/>
            <person name="Wang A.H."/>
            <person name="Wang X."/>
            <person name="Wang Z.-Y."/>
            <person name="Wassarman D.A."/>
            <person name="Weinstock G.M."/>
            <person name="Weissenbach J."/>
            <person name="Williams S.M."/>
            <person name="Woodage T."/>
            <person name="Worley K.C."/>
            <person name="Wu D."/>
            <person name="Yang S."/>
            <person name="Yao Q.A."/>
            <person name="Ye J."/>
            <person name="Yeh R.-F."/>
            <person name="Zaveri J.S."/>
            <person name="Zhan M."/>
            <person name="Zhang G."/>
            <person name="Zhao Q."/>
            <person name="Zheng L."/>
            <person name="Zheng X.H."/>
            <person name="Zhong F.N."/>
            <person name="Zhong W."/>
            <person name="Zhou X."/>
            <person name="Zhu S.C."/>
            <person name="Zhu X."/>
            <person name="Smith H.O."/>
            <person name="Gibbs R.A."/>
            <person name="Myers E.W."/>
            <person name="Rubin G.M."/>
            <person name="Venter J.C."/>
        </authorList>
    </citation>
    <scope>NUCLEOTIDE SEQUENCE [LARGE SCALE GENOMIC DNA]</scope>
    <source>
        <strain evidence="11">Berkeley</strain>
    </source>
</reference>
<reference evidence="11" key="2">
    <citation type="journal article" date="2002" name="Genome Biol.">
        <title>Annotation of the Drosophila melanogaster euchromatic genome: a systematic review.</title>
        <authorList>
            <person name="Misra S."/>
            <person name="Crosby M.A."/>
            <person name="Mungall C.J."/>
            <person name="Matthews B.B."/>
            <person name="Campbell K.S."/>
            <person name="Hradecky P."/>
            <person name="Huang Y."/>
            <person name="Kaminker J.S."/>
            <person name="Millburn G.H."/>
            <person name="Prochnik S.E."/>
            <person name="Smith C.D."/>
            <person name="Tupy J.L."/>
            <person name="Whitfield E.J."/>
            <person name="Bayraktaroglu L."/>
            <person name="Berman B.P."/>
            <person name="Bettencourt B.R."/>
            <person name="Celniker S.E."/>
            <person name="de Grey A.D.N.J."/>
            <person name="Drysdale R.A."/>
            <person name="Harris N.L."/>
            <person name="Richter J."/>
            <person name="Russo S."/>
            <person name="Schroeder A.J."/>
            <person name="Shu S.Q."/>
            <person name="Stapleton M."/>
            <person name="Yamada C."/>
            <person name="Ashburner M."/>
            <person name="Gelbart W.M."/>
            <person name="Rubin G.M."/>
            <person name="Lewis S.E."/>
        </authorList>
    </citation>
    <scope>GENOME REANNOTATION</scope>
    <source>
        <strain evidence="11">Berkeley</strain>
    </source>
</reference>
<reference evidence="8" key="3">
    <citation type="journal article" date="2002" name="Genome Biol.">
        <title>A Drosophila full-length cDNA resource.</title>
        <authorList>
            <person name="Stapleton M."/>
            <person name="Carlson J.W."/>
            <person name="Brokstein P."/>
            <person name="Yu C."/>
            <person name="Champe M."/>
            <person name="George R.A."/>
            <person name="Guarin H."/>
            <person name="Kronmiller B."/>
            <person name="Pacleb J.M."/>
            <person name="Park S."/>
            <person name="Wan K.H."/>
            <person name="Rubin G.M."/>
            <person name="Celniker S.E."/>
        </authorList>
    </citation>
    <scope>NUCLEOTIDE SEQUENCE [LARGE SCALE MRNA]</scope>
    <source>
        <strain evidence="8">Berkeley</strain>
        <tissue evidence="8">Head</tissue>
    </source>
</reference>
<reference evidence="9" key="4">
    <citation type="submission" date="2016-07" db="EMBL/GenBank/DDBJ databases">
        <authorList>
            <person name="Wan K."/>
            <person name="Booth B."/>
            <person name="Spirohn K."/>
            <person name="Hao T."/>
            <person name="Hu Y."/>
            <person name="Calderwood M."/>
            <person name="Hill D."/>
            <person name="Mohr S."/>
            <person name="Vidal M."/>
            <person name="Celniker S."/>
            <person name="Perrimon N."/>
        </authorList>
    </citation>
    <scope>NUCLEOTIDE SEQUENCE [LARGE SCALE MRNA]</scope>
</reference>
<reference evidence="6" key="5">
    <citation type="journal article" date="2017" name="Mol. Biol. Evol.">
        <title>Diverse Cis-Regulatory Mechanisms Contribute to Expression Evolution of Tandem Gene Duplicates.</title>
        <authorList>
            <person name="Baudouin-Gonzalez L."/>
            <person name="Santos M.A."/>
            <person name="Tempesta C."/>
            <person name="Sucena E."/>
            <person name="Roch F."/>
            <person name="Tanaka K."/>
        </authorList>
    </citation>
    <scope>SUBCELLULAR LOCATION</scope>
    <scope>DEVELOPMENTAL STAGE</scope>
</reference>
<accession>Q9VIH9</accession>